<organism>
    <name type="scientific">Parafrankia sp. (strain EAN1pec)</name>
    <dbReference type="NCBI Taxonomy" id="298653"/>
    <lineage>
        <taxon>Bacteria</taxon>
        <taxon>Bacillati</taxon>
        <taxon>Actinomycetota</taxon>
        <taxon>Actinomycetes</taxon>
        <taxon>Frankiales</taxon>
        <taxon>Frankiaceae</taxon>
        <taxon>Parafrankia</taxon>
    </lineage>
</organism>
<dbReference type="EC" id="2.7.7.3" evidence="1"/>
<dbReference type="EMBL" id="CP000820">
    <property type="protein sequence ID" value="ABW10588.1"/>
    <property type="molecule type" value="Genomic_DNA"/>
</dbReference>
<dbReference type="RefSeq" id="WP_020458767.1">
    <property type="nucleotide sequence ID" value="NC_009921.1"/>
</dbReference>
<dbReference type="SMR" id="A8L588"/>
<dbReference type="STRING" id="298653.Franean1_1134"/>
<dbReference type="KEGG" id="fre:Franean1_1134"/>
<dbReference type="eggNOG" id="COG0669">
    <property type="taxonomic scope" value="Bacteria"/>
</dbReference>
<dbReference type="HOGENOM" id="CLU_100149_1_0_11"/>
<dbReference type="UniPathway" id="UPA00241">
    <property type="reaction ID" value="UER00355"/>
</dbReference>
<dbReference type="GO" id="GO:0005737">
    <property type="term" value="C:cytoplasm"/>
    <property type="evidence" value="ECO:0007669"/>
    <property type="project" value="UniProtKB-SubCell"/>
</dbReference>
<dbReference type="GO" id="GO:0005524">
    <property type="term" value="F:ATP binding"/>
    <property type="evidence" value="ECO:0007669"/>
    <property type="project" value="UniProtKB-KW"/>
</dbReference>
<dbReference type="GO" id="GO:0004595">
    <property type="term" value="F:pantetheine-phosphate adenylyltransferase activity"/>
    <property type="evidence" value="ECO:0007669"/>
    <property type="project" value="UniProtKB-UniRule"/>
</dbReference>
<dbReference type="GO" id="GO:0015937">
    <property type="term" value="P:coenzyme A biosynthetic process"/>
    <property type="evidence" value="ECO:0007669"/>
    <property type="project" value="UniProtKB-UniRule"/>
</dbReference>
<dbReference type="CDD" id="cd02163">
    <property type="entry name" value="PPAT"/>
    <property type="match status" value="1"/>
</dbReference>
<dbReference type="Gene3D" id="3.40.50.620">
    <property type="entry name" value="HUPs"/>
    <property type="match status" value="1"/>
</dbReference>
<dbReference type="HAMAP" id="MF_00151">
    <property type="entry name" value="PPAT_bact"/>
    <property type="match status" value="1"/>
</dbReference>
<dbReference type="InterPro" id="IPR004821">
    <property type="entry name" value="Cyt_trans-like"/>
</dbReference>
<dbReference type="InterPro" id="IPR001980">
    <property type="entry name" value="PPAT"/>
</dbReference>
<dbReference type="InterPro" id="IPR014729">
    <property type="entry name" value="Rossmann-like_a/b/a_fold"/>
</dbReference>
<dbReference type="NCBIfam" id="TIGR01510">
    <property type="entry name" value="coaD_prev_kdtB"/>
    <property type="match status" value="1"/>
</dbReference>
<dbReference type="NCBIfam" id="TIGR00125">
    <property type="entry name" value="cyt_tran_rel"/>
    <property type="match status" value="1"/>
</dbReference>
<dbReference type="PANTHER" id="PTHR21342">
    <property type="entry name" value="PHOSPHOPANTETHEINE ADENYLYLTRANSFERASE"/>
    <property type="match status" value="1"/>
</dbReference>
<dbReference type="PANTHER" id="PTHR21342:SF1">
    <property type="entry name" value="PHOSPHOPANTETHEINE ADENYLYLTRANSFERASE"/>
    <property type="match status" value="1"/>
</dbReference>
<dbReference type="Pfam" id="PF01467">
    <property type="entry name" value="CTP_transf_like"/>
    <property type="match status" value="1"/>
</dbReference>
<dbReference type="PRINTS" id="PR01020">
    <property type="entry name" value="LPSBIOSNTHSS"/>
</dbReference>
<dbReference type="SUPFAM" id="SSF52374">
    <property type="entry name" value="Nucleotidylyl transferase"/>
    <property type="match status" value="1"/>
</dbReference>
<reference key="1">
    <citation type="journal article" date="2007" name="Genome Res.">
        <title>Genome characteristics of facultatively symbiotic Frankia sp. strains reflect host range and host plant biogeography.</title>
        <authorList>
            <person name="Normand P."/>
            <person name="Lapierre P."/>
            <person name="Tisa L.S."/>
            <person name="Gogarten J.P."/>
            <person name="Alloisio N."/>
            <person name="Bagnarol E."/>
            <person name="Bassi C.A."/>
            <person name="Berry A.M."/>
            <person name="Bickhart D.M."/>
            <person name="Choisne N."/>
            <person name="Couloux A."/>
            <person name="Cournoyer B."/>
            <person name="Cruveiller S."/>
            <person name="Daubin V."/>
            <person name="Demange N."/>
            <person name="Francino M.P."/>
            <person name="Goltsman E."/>
            <person name="Huang Y."/>
            <person name="Kopp O.R."/>
            <person name="Labarre L."/>
            <person name="Lapidus A."/>
            <person name="Lavire C."/>
            <person name="Marechal J."/>
            <person name="Martinez M."/>
            <person name="Mastronunzio J.E."/>
            <person name="Mullin B.C."/>
            <person name="Niemann J."/>
            <person name="Pujic P."/>
            <person name="Rawnsley T."/>
            <person name="Rouy Z."/>
            <person name="Schenowitz C."/>
            <person name="Sellstedt A."/>
            <person name="Tavares F."/>
            <person name="Tomkins J.P."/>
            <person name="Vallenet D."/>
            <person name="Valverde C."/>
            <person name="Wall L.G."/>
            <person name="Wang Y."/>
            <person name="Medigue C."/>
            <person name="Benson D.R."/>
        </authorList>
    </citation>
    <scope>NUCLEOTIDE SEQUENCE [LARGE SCALE GENOMIC DNA]</scope>
    <source>
        <strain>EAN1pec</strain>
    </source>
</reference>
<protein>
    <recommendedName>
        <fullName evidence="1">Phosphopantetheine adenylyltransferase</fullName>
        <ecNumber evidence="1">2.7.7.3</ecNumber>
    </recommendedName>
    <alternativeName>
        <fullName evidence="1">Dephospho-CoA pyrophosphorylase</fullName>
    </alternativeName>
    <alternativeName>
        <fullName evidence="1">Pantetheine-phosphate adenylyltransferase</fullName>
        <shortName evidence="1">PPAT</shortName>
    </alternativeName>
</protein>
<feature type="chain" id="PRO_1000096795" description="Phosphopantetheine adenylyltransferase">
    <location>
        <begin position="1"/>
        <end position="162"/>
    </location>
</feature>
<feature type="binding site" evidence="1">
    <location>
        <begin position="9"/>
        <end position="10"/>
    </location>
    <ligand>
        <name>ATP</name>
        <dbReference type="ChEBI" id="CHEBI:30616"/>
    </ligand>
</feature>
<feature type="binding site" evidence="1">
    <location>
        <position position="9"/>
    </location>
    <ligand>
        <name>substrate</name>
    </ligand>
</feature>
<feature type="binding site" evidence="1">
    <location>
        <position position="17"/>
    </location>
    <ligand>
        <name>ATP</name>
        <dbReference type="ChEBI" id="CHEBI:30616"/>
    </ligand>
</feature>
<feature type="binding site" evidence="1">
    <location>
        <position position="41"/>
    </location>
    <ligand>
        <name>substrate</name>
    </ligand>
</feature>
<feature type="binding site" evidence="1">
    <location>
        <position position="77"/>
    </location>
    <ligand>
        <name>substrate</name>
    </ligand>
</feature>
<feature type="binding site" evidence="1">
    <location>
        <position position="91"/>
    </location>
    <ligand>
        <name>substrate</name>
    </ligand>
</feature>
<feature type="binding site" evidence="1">
    <location>
        <begin position="92"/>
        <end position="94"/>
    </location>
    <ligand>
        <name>ATP</name>
        <dbReference type="ChEBI" id="CHEBI:30616"/>
    </ligand>
</feature>
<feature type="binding site" evidence="1">
    <location>
        <position position="102"/>
    </location>
    <ligand>
        <name>ATP</name>
        <dbReference type="ChEBI" id="CHEBI:30616"/>
    </ligand>
</feature>
<feature type="binding site" evidence="1">
    <location>
        <begin position="126"/>
        <end position="132"/>
    </location>
    <ligand>
        <name>ATP</name>
        <dbReference type="ChEBI" id="CHEBI:30616"/>
    </ligand>
</feature>
<feature type="site" description="Transition state stabilizer" evidence="1">
    <location>
        <position position="17"/>
    </location>
</feature>
<sequence>MRRAVCPGSFDPITNGHLDIIVRASKLFDEVVVAVLINKSKAHLFTIEERIDLIRDAVRSHPDAPTNVVVDSSHGLLVDFCRVRGIQSIVKGLRAVSDFDYELQMAQMNHSLAGVETLFMSTNPQYAFLSSSLVKEVARYGGDVSGLVPDVVLKGLRDRSAP</sequence>
<evidence type="ECO:0000255" key="1">
    <source>
        <dbReference type="HAMAP-Rule" id="MF_00151"/>
    </source>
</evidence>
<accession>A8L588</accession>
<comment type="function">
    <text evidence="1">Reversibly transfers an adenylyl group from ATP to 4'-phosphopantetheine, yielding dephospho-CoA (dPCoA) and pyrophosphate.</text>
</comment>
<comment type="catalytic activity">
    <reaction evidence="1">
        <text>(R)-4'-phosphopantetheine + ATP + H(+) = 3'-dephospho-CoA + diphosphate</text>
        <dbReference type="Rhea" id="RHEA:19801"/>
        <dbReference type="ChEBI" id="CHEBI:15378"/>
        <dbReference type="ChEBI" id="CHEBI:30616"/>
        <dbReference type="ChEBI" id="CHEBI:33019"/>
        <dbReference type="ChEBI" id="CHEBI:57328"/>
        <dbReference type="ChEBI" id="CHEBI:61723"/>
        <dbReference type="EC" id="2.7.7.3"/>
    </reaction>
</comment>
<comment type="cofactor">
    <cofactor evidence="1">
        <name>Mg(2+)</name>
        <dbReference type="ChEBI" id="CHEBI:18420"/>
    </cofactor>
</comment>
<comment type="pathway">
    <text evidence="1">Cofactor biosynthesis; coenzyme A biosynthesis; CoA from (R)-pantothenate: step 4/5.</text>
</comment>
<comment type="subunit">
    <text evidence="1">Homohexamer.</text>
</comment>
<comment type="subcellular location">
    <subcellularLocation>
        <location evidence="1">Cytoplasm</location>
    </subcellularLocation>
</comment>
<comment type="similarity">
    <text evidence="1">Belongs to the bacterial CoaD family.</text>
</comment>
<keyword id="KW-0067">ATP-binding</keyword>
<keyword id="KW-0173">Coenzyme A biosynthesis</keyword>
<keyword id="KW-0963">Cytoplasm</keyword>
<keyword id="KW-0460">Magnesium</keyword>
<keyword id="KW-0547">Nucleotide-binding</keyword>
<keyword id="KW-0548">Nucleotidyltransferase</keyword>
<keyword id="KW-0808">Transferase</keyword>
<name>COAD_PARS2</name>
<proteinExistence type="inferred from homology"/>
<gene>
    <name evidence="1" type="primary">coaD</name>
    <name type="ordered locus">Franean1_1134</name>
</gene>